<name>HYIN_RHIRD</name>
<organism>
    <name type="scientific">Rhizobium radiobacter</name>
    <name type="common">Agrobacterium tumefaciens</name>
    <name type="synonym">Agrobacterium radiobacter</name>
    <dbReference type="NCBI Taxonomy" id="358"/>
    <lineage>
        <taxon>Bacteria</taxon>
        <taxon>Pseudomonadati</taxon>
        <taxon>Pseudomonadota</taxon>
        <taxon>Alphaproteobacteria</taxon>
        <taxon>Hyphomicrobiales</taxon>
        <taxon>Rhizobiaceae</taxon>
        <taxon>Rhizobium/Agrobacterium group</taxon>
        <taxon>Agrobacterium</taxon>
        <taxon>Agrobacterium tumefaciens complex</taxon>
    </lineage>
</organism>
<protein>
    <recommendedName>
        <fullName>Indoleacetamide hydrolase</fullName>
        <shortName>IAH</shortName>
        <ecNumber>3.5.1.-</ecNumber>
    </recommendedName>
    <alternativeName>
        <fullName>Indole-3-acetamide hydrolase</fullName>
    </alternativeName>
</protein>
<evidence type="ECO:0000250" key="1"/>
<evidence type="ECO:0000305" key="2"/>
<feature type="chain" id="PRO_0000105241" description="Indoleacetamide hydrolase">
    <location>
        <begin position="1"/>
        <end position="467"/>
    </location>
</feature>
<feature type="active site" description="Charge relay system" evidence="1">
    <location>
        <position position="74"/>
    </location>
</feature>
<feature type="active site" description="Charge relay system" evidence="1">
    <location>
        <position position="149"/>
    </location>
</feature>
<feature type="active site" description="Acyl-ester intermediate" evidence="1">
    <location>
        <position position="173"/>
    </location>
</feature>
<keyword id="KW-0073">Auxin biosynthesis</keyword>
<keyword id="KW-0192">Crown gall tumor</keyword>
<keyword id="KW-0378">Hydrolase</keyword>
<keyword id="KW-0614">Plasmid</keyword>
<comment type="function">
    <text>Hydrolyzes indole-3-acetamide (IAM) into indole-3-acetic acid (IAA).</text>
</comment>
<comment type="pathway">
    <text>Plant hormone metabolism; auxin biosynthesis.</text>
</comment>
<comment type="similarity">
    <text evidence="2">Belongs to the amidase family.</text>
</comment>
<proteinExistence type="inferred from homology"/>
<geneLocation type="plasmid">
    <name>pTiA6NC</name>
</geneLocation>
<reference key="1">
    <citation type="journal article" date="1984" name="Nucleic Acids Res.">
        <title>The sequence of the tms transcript 2 locus of the A. tumefaciens plasmid pTiA6 and characterization of the mutation in pTiA66 that is responsible for auxin attenuation.</title>
        <authorList>
            <person name="Sciaky D."/>
            <person name="Thomashow M.F."/>
        </authorList>
    </citation>
    <scope>NUCLEOTIDE SEQUENCE [GENOMIC DNA]</scope>
</reference>
<reference key="2">
    <citation type="journal article" date="1984" name="Proc. Natl. Acad. Sci. U.S.A.">
        <title>Nucleotide sequence of the tms genes of the pTiA6NC octopine Ti plasmid: two gene products involved in plant tumorigenesis.</title>
        <authorList>
            <person name="Klee H."/>
            <person name="Montoya A."/>
            <person name="Horodyski F."/>
            <person name="Lichtenstein C."/>
            <person name="Garfinkel D."/>
            <person name="Fuller S."/>
            <person name="Flores C."/>
            <person name="Peschon J."/>
            <person name="Nester E."/>
            <person name="Gordon M."/>
        </authorList>
    </citation>
    <scope>NUCLEOTIDE SEQUENCE [GENOMIC DNA]</scope>
</reference>
<accession>P0A2X0</accession>
<accession>P03868</accession>
<dbReference type="EC" id="3.5.1.-"/>
<dbReference type="EMBL" id="X00409">
    <property type="protein sequence ID" value="CAA25116.1"/>
    <property type="molecule type" value="Genomic_DNA"/>
</dbReference>
<dbReference type="EMBL" id="AF242881">
    <property type="protein sequence ID" value="AAF77122.1"/>
    <property type="molecule type" value="Genomic_DNA"/>
</dbReference>
<dbReference type="EMBL" id="AH003431">
    <property type="protein sequence ID" value="AAA92549.1"/>
    <property type="molecule type" value="Genomic_DNA"/>
</dbReference>
<dbReference type="PIR" id="A04501">
    <property type="entry name" value="Q2AGAT"/>
</dbReference>
<dbReference type="RefSeq" id="NP_059675.1">
    <property type="nucleotide sequence ID" value="NC_002377.1"/>
</dbReference>
<dbReference type="RefSeq" id="WP_010892363.1">
    <property type="nucleotide sequence ID" value="NZ_QSNU01000012.1"/>
</dbReference>
<dbReference type="SMR" id="P0A2X0"/>
<dbReference type="OrthoDB" id="9777859at2"/>
<dbReference type="BioCyc" id="MetaCyc:MONOMER-7862"/>
<dbReference type="UniPathway" id="UPA00151"/>
<dbReference type="GO" id="GO:0016787">
    <property type="term" value="F:hydrolase activity"/>
    <property type="evidence" value="ECO:0007669"/>
    <property type="project" value="UniProtKB-KW"/>
</dbReference>
<dbReference type="GO" id="GO:0009851">
    <property type="term" value="P:auxin biosynthetic process"/>
    <property type="evidence" value="ECO:0007669"/>
    <property type="project" value="UniProtKB-UniPathway"/>
</dbReference>
<dbReference type="Gene3D" id="3.90.1300.10">
    <property type="entry name" value="Amidase signature (AS) domain"/>
    <property type="match status" value="1"/>
</dbReference>
<dbReference type="InterPro" id="IPR000120">
    <property type="entry name" value="Amidase"/>
</dbReference>
<dbReference type="InterPro" id="IPR020556">
    <property type="entry name" value="Amidase_CS"/>
</dbReference>
<dbReference type="InterPro" id="IPR023631">
    <property type="entry name" value="Amidase_dom"/>
</dbReference>
<dbReference type="InterPro" id="IPR036928">
    <property type="entry name" value="AS_sf"/>
</dbReference>
<dbReference type="NCBIfam" id="NF005688">
    <property type="entry name" value="PRK07488.1"/>
    <property type="match status" value="1"/>
</dbReference>
<dbReference type="PANTHER" id="PTHR11895:SF151">
    <property type="entry name" value="GLUTAMYL-TRNA(GLN) AMIDOTRANSFERASE SUBUNIT A"/>
    <property type="match status" value="1"/>
</dbReference>
<dbReference type="PANTHER" id="PTHR11895">
    <property type="entry name" value="TRANSAMIDASE"/>
    <property type="match status" value="1"/>
</dbReference>
<dbReference type="Pfam" id="PF01425">
    <property type="entry name" value="Amidase"/>
    <property type="match status" value="1"/>
</dbReference>
<dbReference type="SUPFAM" id="SSF75304">
    <property type="entry name" value="Amidase signature (AS) enzymes"/>
    <property type="match status" value="1"/>
</dbReference>
<dbReference type="PROSITE" id="PS00571">
    <property type="entry name" value="AMIDASES"/>
    <property type="match status" value="1"/>
</dbReference>
<sequence length="467" mass="49805">MVAITSLAQSLEHLKRKDYSCLELVETLIARCEAAKSLNALLATDWDGLRRSAKKIDRHGNAGVGLCGIPLCFKANIATGVFPTSAATPALINHLPKIPSRVAERLFSAGALPGASGNMHELSFGITSNNYATGAVRNPWNPDLIPGGSSGGVAAAVASRLMLGGIGTDTGASVRLPAALCGVVGFRPTLGRYPGDRIIPVSPTRDTPGIIAQCVADVVILDRIISGTPERIPPVPLKGLRIGLPTTYFYDDLDADVALAAETTIRLLANKGVTFVEANIPHLDELNKGASFPVALYEFPHALKQYLDDFVKTVSFSDVIKGIRSPDVANIANAQIDGHQISKAEYELARHSFRPRLQATYRNYFKLNRLDAILFPTAPLVARPIGQDSSVIHNGTMLDTFKIYVRNVDPSSNAGLPGLSIPVCLTPDRLPVGMEIDGLADSDQRLLAIGGALEEAIGFRYFAGLPN</sequence>
<gene>
    <name type="primary">tms2</name>
    <name type="synonym">iaaH</name>
</gene>